<sequence length="1955" mass="227218">MEGTCSEEENLAKRVTPTAVTSGTYGTHVVDTTDLALSDVVIGCGSTIYETSDSIGSDVMLGLSSHGVSSVSGLDRDLNSFKKRIDANTEEQREHADMMVGLQRKIEEYRRRIVDAEKQVSIQKANDDVSFSIKETADTWLPDMKSDAADYEWASRLDEERRRNDELHMQITQQQVDLQRLQKYFEANMQEKEKIYQTREKNLAYYLNAEQRKMLDLWEELQRVRRQFADYKEQTERDLENQKNEVAKVTQSVGGMAGRLNTSSHGDSGLVQDVVLLEAMRRFRELQAVPVGASADDYNALMKKYEETVERVIELESHGDGSTAKMLSLEAELRRTKDKFIECSEFLRKLGDLAAGSYRGDERTSKIVSLSPGGMSLPSEIYRSVRNILRNHDSEMQHIQRKLKNSDTQVCELTTRLEGTEEARRRSDKQLVDAKREINIQQRAVDDANRELRRVEDRLHIMESEKIVAENARQQLEEEVRRLTLQVDQSKADGERRVVEEGEIQKRIVEDEYRSMISELTRRMNAFQDENKRLKNDLGCTKERLKNVEFEYNSTVRKLEDKDIALKHLEDTKLDLLKDLENQRTRYDAVTNELDTLQTTFETSTKNIAQLEANIKEINLMRDEISKEKDSLAQKLADVTHKLEIETVRREDIQRSCVGHSEDVEKQRLQIIEYEREVMALRRLNDELDTNVKTGQAKVTSLENSIISVQTEVTKLTTLNDKLQKEKQSIMSSKQKADTDVDLLKEKLRKLEQECDKLKEENKALHEDEQIARQMCKEEASRIHLLERDLKDAMTEVEELKKQLQKMDEENSERLESVLRTKISSDTVDTSEIAEYTEVKVKELREKYKADLERLQSNKDDLERRVQILEDELAERQRIVERQRTEMNDLKLEYQLESDRLRAEMATVELKYQSEVEDERDQRSRDADSWKVTSEELRSKISFMEKMLEEAKHRETVLREEATEWEEKHDIISNESLKLRNEIERIRSDAEEDIQKWKKDVHMAQNELKNLERVCETLRSQLTAANDRVASLNTTINEQTSKIRELNSHEHRLEEDLADSRATSSAIENDLGNATGRLRSSEEHNAILQSENRKSKTEIEALKHQIDTIMNTKESCESEVERLKKKIVQTTTITKEQNEKIEKLRIEHDHLERDYREKTKEVDRLKEVEKTFELKVNRARQELDEFSKKLIVTETERNAISGEAQKLDKEVQLVKEQLQYKSDEFHKALDELANAHRISEEGRVNAIHQLEARRFEIDDLKSRLENSEQRLATLQQEYVNADKERGALNDAMRRFQATISRSVVAEEHVDVSTIETQMQKLMSRIEAIERERNEYRDSLNRLKNRCSTSYSSVDRQETVYRTFEERVISAEDERRKVELKLSSMKEMLKSQEEKLKQRDEERRNLKSNIVTFELEARAKDAQIRHLNDLLKRVQAELENSQNDNRALRERQEQYETNRIHLEQRLPTDEGEPRVKALMAAFATERQSLSDSLKKLASQLQISETKNADLRDDAERLKRDLLKAERVEEDLRRNLVEQTEIMRENQQLRSQLGVAQSDLANASGRKQQLEGELAAVRAELRDHKQHLHDAISRIAELQRQLQDANAEKSRLTDRIIGLEKTIGTLRNTETELRAQLSTAADERKALNSELEEMRRRIVQMESEKKDVDNQLEEVNKARIIMTKKIEILETEKHSAELVISETASQREAIERSLNALERENKELYKNCAQLQQQIAQLEMDNGERLIALTTKQKEDHEKFVAAVKAEKVQVERIVENRDRAQKSRIRQLENQLSMMREQLDNERARSHQMSERFIVNETNRRVSSSSFRLSGDAAGVAAATILHPQTDRLDYVFANRSALSSYYTVPTEQHASRGKEAYRTSSTIKSSEGTTRESYTYQSRTVSSNIIEQANGMTSSASGEGMSRAYPPTEVNQGDVTGRKSRPATRKQQMKSTFSE</sequence>
<protein>
    <recommendedName>
        <fullName>227 kDa spindle- and centromere-associated protein</fullName>
    </recommendedName>
    <alternativeName>
        <fullName>PUMA1</fullName>
    </alternativeName>
</protein>
<keyword id="KW-0131">Cell cycle</keyword>
<keyword id="KW-0132">Cell division</keyword>
<keyword id="KW-0137">Centromere</keyword>
<keyword id="KW-0158">Chromosome</keyword>
<keyword id="KW-0175">Coiled coil</keyword>
<keyword id="KW-0963">Cytoplasm</keyword>
<keyword id="KW-0206">Cytoskeleton</keyword>
<keyword id="KW-0995">Kinetochore</keyword>
<keyword id="KW-0469">Meiosis</keyword>
<keyword id="KW-0498">Mitosis</keyword>
<keyword id="KW-1185">Reference proteome</keyword>
<evidence type="ECO:0000255" key="1"/>
<evidence type="ECO:0000256" key="2">
    <source>
        <dbReference type="SAM" id="MobiDB-lite"/>
    </source>
</evidence>
<organism>
    <name type="scientific">Parascaris univalens</name>
    <name type="common">Nematode worm</name>
    <dbReference type="NCBI Taxonomy" id="6257"/>
    <lineage>
        <taxon>Eukaryota</taxon>
        <taxon>Metazoa</taxon>
        <taxon>Ecdysozoa</taxon>
        <taxon>Nematoda</taxon>
        <taxon>Chromadorea</taxon>
        <taxon>Rhabditida</taxon>
        <taxon>Spirurina</taxon>
        <taxon>Ascaridomorpha</taxon>
        <taxon>Ascaridoidea</taxon>
        <taxon>Ascarididae</taxon>
        <taxon>Parascaris</taxon>
    </lineage>
</organism>
<accession>O61308</accession>
<reference key="1">
    <citation type="journal article" date="1998" name="J. Cell Sci.">
        <title>PUMA1: a novel protein that associates with the centrosomes, spindle and centromeres in the nematode Parascaris.</title>
        <authorList>
            <person name="Esteban M.R."/>
            <person name="Giovinazzo G."/>
            <person name="de la Hera A."/>
            <person name="Goday C."/>
        </authorList>
    </citation>
    <scope>NUCLEOTIDE SEQUENCE [MRNA]</scope>
    <source>
        <tissue>Embryo</tissue>
    </source>
</reference>
<name>PUMA_PARUN</name>
<gene>
    <name type="primary">PUMA1</name>
</gene>
<feature type="chain" id="PRO_0000097106" description="227 kDa spindle- and centromere-associated protein">
    <location>
        <begin position="1"/>
        <end position="1955"/>
    </location>
</feature>
<feature type="region of interest" description="Disordered" evidence="2">
    <location>
        <begin position="1865"/>
        <end position="1896"/>
    </location>
</feature>
<feature type="region of interest" description="Disordered" evidence="2">
    <location>
        <begin position="1912"/>
        <end position="1955"/>
    </location>
</feature>
<feature type="coiled-coil region" evidence="1">
    <location>
        <begin position="82"/>
        <end position="129"/>
    </location>
</feature>
<feature type="coiled-coil region" evidence="1">
    <location>
        <begin position="152"/>
        <end position="317"/>
    </location>
</feature>
<feature type="coiled-coil region" evidence="1">
    <location>
        <begin position="385"/>
        <end position="1747"/>
    </location>
</feature>
<feature type="coiled-coil region" evidence="1">
    <location>
        <begin position="1770"/>
        <end position="1813"/>
    </location>
</feature>
<feature type="compositionally biased region" description="Polar residues" evidence="2">
    <location>
        <begin position="1878"/>
        <end position="1896"/>
    </location>
</feature>
<feature type="compositionally biased region" description="Basic residues" evidence="2">
    <location>
        <begin position="1938"/>
        <end position="1948"/>
    </location>
</feature>
<proteinExistence type="evidence at transcript level"/>
<dbReference type="EMBL" id="AF009623">
    <property type="protein sequence ID" value="AAC38995.1"/>
    <property type="molecule type" value="mRNA"/>
</dbReference>
<dbReference type="PIR" id="T30934">
    <property type="entry name" value="T30934"/>
</dbReference>
<dbReference type="SMR" id="O61308"/>
<dbReference type="Proteomes" id="UP000887569">
    <property type="component" value="Unplaced"/>
</dbReference>
<dbReference type="GO" id="GO:0005813">
    <property type="term" value="C:centrosome"/>
    <property type="evidence" value="ECO:0007669"/>
    <property type="project" value="UniProtKB-SubCell"/>
</dbReference>
<dbReference type="GO" id="GO:0005737">
    <property type="term" value="C:cytoplasm"/>
    <property type="evidence" value="ECO:0007669"/>
    <property type="project" value="UniProtKB-KW"/>
</dbReference>
<dbReference type="GO" id="GO:0000776">
    <property type="term" value="C:kinetochore"/>
    <property type="evidence" value="ECO:0007669"/>
    <property type="project" value="UniProtKB-KW"/>
</dbReference>
<dbReference type="GO" id="GO:0005819">
    <property type="term" value="C:spindle"/>
    <property type="evidence" value="ECO:0007669"/>
    <property type="project" value="UniProtKB-SubCell"/>
</dbReference>
<dbReference type="GO" id="GO:0051301">
    <property type="term" value="P:cell division"/>
    <property type="evidence" value="ECO:0007669"/>
    <property type="project" value="UniProtKB-KW"/>
</dbReference>
<dbReference type="GO" id="GO:0051321">
    <property type="term" value="P:meiotic cell cycle"/>
    <property type="evidence" value="ECO:0007669"/>
    <property type="project" value="UniProtKB-KW"/>
</dbReference>
<dbReference type="Gene3D" id="1.10.287.1490">
    <property type="match status" value="2"/>
</dbReference>
<dbReference type="InterPro" id="IPR055167">
    <property type="entry name" value="Rootletin-like_CC"/>
</dbReference>
<dbReference type="PANTHER" id="PTHR23159">
    <property type="entry name" value="CENTROSOMAL PROTEIN 2"/>
    <property type="match status" value="1"/>
</dbReference>
<dbReference type="PANTHER" id="PTHR23159:SF31">
    <property type="entry name" value="CENTROSOME-ASSOCIATED PROTEIN CEP250 ISOFORM X1"/>
    <property type="match status" value="1"/>
</dbReference>
<dbReference type="Pfam" id="PF24423">
    <property type="entry name" value="OVT1"/>
    <property type="match status" value="1"/>
</dbReference>
<dbReference type="Pfam" id="PF24627">
    <property type="entry name" value="PUMA_CC"/>
    <property type="match status" value="1"/>
</dbReference>
<dbReference type="Pfam" id="PF15035">
    <property type="entry name" value="Rootletin"/>
    <property type="match status" value="1"/>
</dbReference>
<dbReference type="SUPFAM" id="SSF57997">
    <property type="entry name" value="Tropomyosin"/>
    <property type="match status" value="1"/>
</dbReference>
<comment type="function">
    <text>May play a role in the organization of the spindle apparatus and its interaction with the centromeres.</text>
</comment>
<comment type="subcellular location">
    <subcellularLocation>
        <location>Cytoplasm</location>
        <location>Cytoskeleton</location>
        <location>Microtubule organizing center</location>
        <location>Centrosome</location>
    </subcellularLocation>
    <subcellularLocation>
        <location>Chromosome</location>
        <location>Centromere</location>
        <location>Kinetochore</location>
    </subcellularLocation>
    <subcellularLocation>
        <location>Cytoplasm</location>
        <location>Cytoskeleton</location>
        <location>Spindle</location>
    </subcellularLocation>
    <subcellularLocation>
        <location>Chromosome</location>
        <location>Centromere</location>
    </subcellularLocation>
    <text>Centrosomes and kinetochore microtubules of mitotic cells. Also localizes to the spindle mid- zone region during anaphase and to the midbody during telophase. During meiosis, associates with centrosomes and discrete centromeric regions lacking kinetochore structures.</text>
</comment>